<sequence length="347" mass="37035">MNILGIETSCDETSASVVQNGRVTSNIISSQLIHTSYGGVVPELASREHERLIVSVVDAAVNEANIQKNDLDVIAATAGPGLIGAVMVGLCFAQGLAYVLDKPLVPVNHIEAHIFSGFIHEGPDHDPPKEAFISLTVSGGHTMLSVVQQDLTYQVIGRTIDDAAGEAFDKTGKMLGLDYPAGPVIDRLAADGDPGFHEFPRALTSQSRTSKSYRNNFDFSFSGLKTSVLHYIGKQDPSYIERHLQDIAASVQEAITSVLVEKTVAAAKKYRINAISVAGGVSANSGLRQKMAVACEANGLRLYIPKPVYSTDNAAMIATFAHLKLSRGTTTPNTYDIAPFASFETQG</sequence>
<comment type="function">
    <text evidence="1">Required for the formation of a threonylcarbamoyl group on adenosine at position 37 (t(6)A37) in tRNAs that read codons beginning with adenine. Is involved in the transfer of the threonylcarbamoyl moiety of threonylcarbamoyl-AMP (TC-AMP) to the N6 group of A37, together with TsaE and TsaB. TsaD likely plays a direct catalytic role in this reaction.</text>
</comment>
<comment type="catalytic activity">
    <reaction evidence="1">
        <text>L-threonylcarbamoyladenylate + adenosine(37) in tRNA = N(6)-L-threonylcarbamoyladenosine(37) in tRNA + AMP + H(+)</text>
        <dbReference type="Rhea" id="RHEA:37059"/>
        <dbReference type="Rhea" id="RHEA-COMP:10162"/>
        <dbReference type="Rhea" id="RHEA-COMP:10163"/>
        <dbReference type="ChEBI" id="CHEBI:15378"/>
        <dbReference type="ChEBI" id="CHEBI:73682"/>
        <dbReference type="ChEBI" id="CHEBI:74411"/>
        <dbReference type="ChEBI" id="CHEBI:74418"/>
        <dbReference type="ChEBI" id="CHEBI:456215"/>
        <dbReference type="EC" id="2.3.1.234"/>
    </reaction>
</comment>
<comment type="cofactor">
    <cofactor evidence="1">
        <name>Fe(2+)</name>
        <dbReference type="ChEBI" id="CHEBI:29033"/>
    </cofactor>
    <text evidence="1">Binds 1 Fe(2+) ion per subunit.</text>
</comment>
<comment type="subcellular location">
    <subcellularLocation>
        <location evidence="1">Cytoplasm</location>
    </subcellularLocation>
</comment>
<comment type="similarity">
    <text evidence="1">Belongs to the KAE1 / TsaD family.</text>
</comment>
<keyword id="KW-0012">Acyltransferase</keyword>
<keyword id="KW-0963">Cytoplasm</keyword>
<keyword id="KW-0408">Iron</keyword>
<keyword id="KW-0479">Metal-binding</keyword>
<keyword id="KW-0808">Transferase</keyword>
<keyword id="KW-0819">tRNA processing</keyword>
<evidence type="ECO:0000255" key="1">
    <source>
        <dbReference type="HAMAP-Rule" id="MF_01445"/>
    </source>
</evidence>
<accession>B3EPA8</accession>
<dbReference type="EC" id="2.3.1.234" evidence="1"/>
<dbReference type="EMBL" id="CP001101">
    <property type="protein sequence ID" value="ACE05247.1"/>
    <property type="molecule type" value="Genomic_DNA"/>
</dbReference>
<dbReference type="SMR" id="B3EPA8"/>
<dbReference type="STRING" id="331678.Cphamn1_2346"/>
<dbReference type="KEGG" id="cpb:Cphamn1_2346"/>
<dbReference type="eggNOG" id="COG0533">
    <property type="taxonomic scope" value="Bacteria"/>
</dbReference>
<dbReference type="HOGENOM" id="CLU_023208_0_2_10"/>
<dbReference type="OrthoDB" id="9806197at2"/>
<dbReference type="GO" id="GO:0005737">
    <property type="term" value="C:cytoplasm"/>
    <property type="evidence" value="ECO:0007669"/>
    <property type="project" value="UniProtKB-SubCell"/>
</dbReference>
<dbReference type="GO" id="GO:0005506">
    <property type="term" value="F:iron ion binding"/>
    <property type="evidence" value="ECO:0007669"/>
    <property type="project" value="UniProtKB-UniRule"/>
</dbReference>
<dbReference type="GO" id="GO:0061711">
    <property type="term" value="F:N(6)-L-threonylcarbamoyladenine synthase activity"/>
    <property type="evidence" value="ECO:0007669"/>
    <property type="project" value="UniProtKB-EC"/>
</dbReference>
<dbReference type="GO" id="GO:0002949">
    <property type="term" value="P:tRNA threonylcarbamoyladenosine modification"/>
    <property type="evidence" value="ECO:0007669"/>
    <property type="project" value="UniProtKB-UniRule"/>
</dbReference>
<dbReference type="CDD" id="cd24133">
    <property type="entry name" value="ASKHA_NBD_TsaD_bac"/>
    <property type="match status" value="1"/>
</dbReference>
<dbReference type="FunFam" id="3.30.420.40:FF:000012">
    <property type="entry name" value="tRNA N6-adenosine threonylcarbamoyltransferase"/>
    <property type="match status" value="1"/>
</dbReference>
<dbReference type="FunFam" id="3.30.420.40:FF:000040">
    <property type="entry name" value="tRNA N6-adenosine threonylcarbamoyltransferase"/>
    <property type="match status" value="1"/>
</dbReference>
<dbReference type="Gene3D" id="3.30.420.40">
    <property type="match status" value="2"/>
</dbReference>
<dbReference type="HAMAP" id="MF_01445">
    <property type="entry name" value="TsaD"/>
    <property type="match status" value="1"/>
</dbReference>
<dbReference type="InterPro" id="IPR043129">
    <property type="entry name" value="ATPase_NBD"/>
</dbReference>
<dbReference type="InterPro" id="IPR000905">
    <property type="entry name" value="Gcp-like_dom"/>
</dbReference>
<dbReference type="InterPro" id="IPR017861">
    <property type="entry name" value="KAE1/TsaD"/>
</dbReference>
<dbReference type="InterPro" id="IPR022450">
    <property type="entry name" value="TsaD"/>
</dbReference>
<dbReference type="NCBIfam" id="TIGR00329">
    <property type="entry name" value="gcp_kae1"/>
    <property type="match status" value="1"/>
</dbReference>
<dbReference type="NCBIfam" id="TIGR03723">
    <property type="entry name" value="T6A_TsaD_YgjD"/>
    <property type="match status" value="1"/>
</dbReference>
<dbReference type="PANTHER" id="PTHR11735">
    <property type="entry name" value="TRNA N6-ADENOSINE THREONYLCARBAMOYLTRANSFERASE"/>
    <property type="match status" value="1"/>
</dbReference>
<dbReference type="PANTHER" id="PTHR11735:SF6">
    <property type="entry name" value="TRNA N6-ADENOSINE THREONYLCARBAMOYLTRANSFERASE, MITOCHONDRIAL"/>
    <property type="match status" value="1"/>
</dbReference>
<dbReference type="Pfam" id="PF00814">
    <property type="entry name" value="TsaD"/>
    <property type="match status" value="1"/>
</dbReference>
<dbReference type="PRINTS" id="PR00789">
    <property type="entry name" value="OSIALOPTASE"/>
</dbReference>
<dbReference type="SUPFAM" id="SSF53067">
    <property type="entry name" value="Actin-like ATPase domain"/>
    <property type="match status" value="1"/>
</dbReference>
<gene>
    <name evidence="1" type="primary">tsaD</name>
    <name type="synonym">gcp</name>
    <name type="ordered locus">Cphamn1_2346</name>
</gene>
<name>TSAD_CHLPB</name>
<reference key="1">
    <citation type="submission" date="2008-06" db="EMBL/GenBank/DDBJ databases">
        <title>Complete sequence of Chlorobium phaeobacteroides BS1.</title>
        <authorList>
            <consortium name="US DOE Joint Genome Institute"/>
            <person name="Lucas S."/>
            <person name="Copeland A."/>
            <person name="Lapidus A."/>
            <person name="Glavina del Rio T."/>
            <person name="Dalin E."/>
            <person name="Tice H."/>
            <person name="Bruce D."/>
            <person name="Goodwin L."/>
            <person name="Pitluck S."/>
            <person name="Schmutz J."/>
            <person name="Larimer F."/>
            <person name="Land M."/>
            <person name="Hauser L."/>
            <person name="Kyrpides N."/>
            <person name="Ovchinnikova G."/>
            <person name="Li T."/>
            <person name="Liu Z."/>
            <person name="Zhao F."/>
            <person name="Overmann J."/>
            <person name="Bryant D.A."/>
            <person name="Richardson P."/>
        </authorList>
    </citation>
    <scope>NUCLEOTIDE SEQUENCE [LARGE SCALE GENOMIC DNA]</scope>
    <source>
        <strain>BS1</strain>
    </source>
</reference>
<protein>
    <recommendedName>
        <fullName evidence="1">tRNA N6-adenosine threonylcarbamoyltransferase</fullName>
        <ecNumber evidence="1">2.3.1.234</ecNumber>
    </recommendedName>
    <alternativeName>
        <fullName evidence="1">N6-L-threonylcarbamoyladenine synthase</fullName>
        <shortName evidence="1">t(6)A synthase</shortName>
    </alternativeName>
    <alternativeName>
        <fullName evidence="1">t(6)A37 threonylcarbamoyladenosine biosynthesis protein TsaD</fullName>
    </alternativeName>
    <alternativeName>
        <fullName evidence="1">tRNA threonylcarbamoyladenosine biosynthesis protein TsaD</fullName>
    </alternativeName>
</protein>
<feature type="chain" id="PRO_1000145962" description="tRNA N6-adenosine threonylcarbamoyltransferase">
    <location>
        <begin position="1"/>
        <end position="347"/>
    </location>
</feature>
<feature type="binding site" evidence="1">
    <location>
        <position position="109"/>
    </location>
    <ligand>
        <name>Fe cation</name>
        <dbReference type="ChEBI" id="CHEBI:24875"/>
    </ligand>
</feature>
<feature type="binding site" evidence="1">
    <location>
        <position position="113"/>
    </location>
    <ligand>
        <name>Fe cation</name>
        <dbReference type="ChEBI" id="CHEBI:24875"/>
    </ligand>
</feature>
<feature type="binding site" evidence="1">
    <location>
        <begin position="136"/>
        <end position="140"/>
    </location>
    <ligand>
        <name>substrate</name>
    </ligand>
</feature>
<feature type="binding site" evidence="1">
    <location>
        <position position="169"/>
    </location>
    <ligand>
        <name>substrate</name>
    </ligand>
</feature>
<feature type="binding site" evidence="1">
    <location>
        <position position="182"/>
    </location>
    <ligand>
        <name>substrate</name>
    </ligand>
</feature>
<feature type="binding site" evidence="1">
    <location>
        <position position="186"/>
    </location>
    <ligand>
        <name>substrate</name>
    </ligand>
</feature>
<feature type="binding site" evidence="1">
    <location>
        <position position="284"/>
    </location>
    <ligand>
        <name>substrate</name>
    </ligand>
</feature>
<feature type="binding site" evidence="1">
    <location>
        <position position="312"/>
    </location>
    <ligand>
        <name>Fe cation</name>
        <dbReference type="ChEBI" id="CHEBI:24875"/>
    </ligand>
</feature>
<organism>
    <name type="scientific">Chlorobium phaeobacteroides (strain BS1)</name>
    <dbReference type="NCBI Taxonomy" id="331678"/>
    <lineage>
        <taxon>Bacteria</taxon>
        <taxon>Pseudomonadati</taxon>
        <taxon>Chlorobiota</taxon>
        <taxon>Chlorobiia</taxon>
        <taxon>Chlorobiales</taxon>
        <taxon>Chlorobiaceae</taxon>
        <taxon>Chlorobium/Pelodictyon group</taxon>
        <taxon>Chlorobium</taxon>
    </lineage>
</organism>
<proteinExistence type="inferred from homology"/>